<gene>
    <name evidence="1" type="primary">mhpC</name>
    <name type="ordered locus">ECDH10B_1361</name>
</gene>
<name>MHPC_ECODH</name>
<protein>
    <recommendedName>
        <fullName evidence="1">2-hydroxy-6-oxononadienedioate/2-hydroxy-6-oxononatrienedioate hydrolase</fullName>
        <ecNumber evidence="1">3.7.1.14</ecNumber>
    </recommendedName>
    <alternativeName>
        <fullName evidence="1">2-hydroxy-6-ketonona-2,4-diene-1,9-dioic acid 5,6-hydrolase</fullName>
    </alternativeName>
    <alternativeName>
        <fullName evidence="1">2-hydroxy-6-oxonona-2,4,7-triene-1,9-dioic acid 5,6-hydrolase</fullName>
    </alternativeName>
    <alternativeName>
        <fullName evidence="1">2-hydroxy-6-oxonona-2,4-diene-1,9-dioic acid 5,6-hydrolase</fullName>
    </alternativeName>
</protein>
<organism>
    <name type="scientific">Escherichia coli (strain K12 / DH10B)</name>
    <dbReference type="NCBI Taxonomy" id="316385"/>
    <lineage>
        <taxon>Bacteria</taxon>
        <taxon>Pseudomonadati</taxon>
        <taxon>Pseudomonadota</taxon>
        <taxon>Gammaproteobacteria</taxon>
        <taxon>Enterobacterales</taxon>
        <taxon>Enterobacteriaceae</taxon>
        <taxon>Escherichia</taxon>
    </lineage>
</organism>
<reference key="1">
    <citation type="journal article" date="2008" name="J. Bacteriol.">
        <title>The complete genome sequence of Escherichia coli DH10B: insights into the biology of a laboratory workhorse.</title>
        <authorList>
            <person name="Durfee T."/>
            <person name="Nelson R."/>
            <person name="Baldwin S."/>
            <person name="Plunkett G. III"/>
            <person name="Burland V."/>
            <person name="Mau B."/>
            <person name="Petrosino J.F."/>
            <person name="Qin X."/>
            <person name="Muzny D.M."/>
            <person name="Ayele M."/>
            <person name="Gibbs R.A."/>
            <person name="Csorgo B."/>
            <person name="Posfai G."/>
            <person name="Weinstock G.M."/>
            <person name="Blattner F.R."/>
        </authorList>
    </citation>
    <scope>NUCLEOTIDE SEQUENCE [LARGE SCALE GENOMIC DNA]</scope>
    <source>
        <strain>K12 / DH10B</strain>
    </source>
</reference>
<accession>B1XBJ6</accession>
<proteinExistence type="inferred from homology"/>
<keyword id="KW-0058">Aromatic hydrocarbons catabolism</keyword>
<keyword id="KW-0378">Hydrolase</keyword>
<comment type="function">
    <text evidence="1">Catalyzes the cleavage of the C5-C6 bond of 2-hydroxy-6-oxononadienedioate and 2-hydroxy-6-oxononatrienedioate, a dienol ring fission product of the bacterial meta-cleavage pathway for degradation of phenylpropionic acid.</text>
</comment>
<comment type="catalytic activity">
    <reaction evidence="1">
        <text>(2Z,4E)-2-hydroxy-6-oxonona-2,4-dienedioate + H2O = (2Z)-2-hydroxypenta-2,4-dienoate + succinate + H(+)</text>
        <dbReference type="Rhea" id="RHEA:34187"/>
        <dbReference type="ChEBI" id="CHEBI:15377"/>
        <dbReference type="ChEBI" id="CHEBI:15378"/>
        <dbReference type="ChEBI" id="CHEBI:30031"/>
        <dbReference type="ChEBI" id="CHEBI:66887"/>
        <dbReference type="ChEBI" id="CHEBI:67152"/>
        <dbReference type="EC" id="3.7.1.14"/>
    </reaction>
</comment>
<comment type="catalytic activity">
    <reaction evidence="1">
        <text>(2Z,4E,7E)-2-hydroxy-6-oxonona-2,4,7-trienedioate + H2O = (2Z)-2-hydroxypenta-2,4-dienoate + fumarate + H(+)</text>
        <dbReference type="Rhea" id="RHEA:34191"/>
        <dbReference type="ChEBI" id="CHEBI:15377"/>
        <dbReference type="ChEBI" id="CHEBI:15378"/>
        <dbReference type="ChEBI" id="CHEBI:29806"/>
        <dbReference type="ChEBI" id="CHEBI:66888"/>
        <dbReference type="ChEBI" id="CHEBI:67152"/>
        <dbReference type="EC" id="3.7.1.14"/>
    </reaction>
</comment>
<comment type="pathway">
    <text evidence="1">Aromatic compound metabolism; 3-phenylpropanoate degradation.</text>
</comment>
<comment type="subunit">
    <text evidence="1">Homodimer.</text>
</comment>
<comment type="similarity">
    <text evidence="1">Belongs to the AB hydrolase superfamily. MhpC family.</text>
</comment>
<comment type="sequence caution" evidence="2">
    <conflict type="erroneous initiation">
        <sequence resource="EMBL-CDS" id="ACB02466"/>
    </conflict>
    <text>Extended N-terminus.</text>
</comment>
<sequence>MSYQPQTEAATSRFLNVEEAGKTLRIHFNDCGQGDETVVLLHGSGPGATGWANFSRNIDPLVEAGYRVILLDCPGWGKSDSVVNSGSRSDLNARILKSVVDQLDIAKIHLLGNSMGGHSSVAFTLKWPERVGKLVLMGGGTGGMSLFTPMPTEGIKRLNQLYRQPTIENLKLMMDIFVFDTSDLTDALFEARLNNMLSRRDHLENFVKSLEANPKQFPDFGPRLAEIKAQTLIVWGRNDRFVPMDAGLRLLSGIAGSELHIFRDCGHWAQWEHADAFNQLVLNFLARP</sequence>
<evidence type="ECO:0000255" key="1">
    <source>
        <dbReference type="HAMAP-Rule" id="MF_01654"/>
    </source>
</evidence>
<evidence type="ECO:0000305" key="2"/>
<feature type="chain" id="PRO_1000187016" description="2-hydroxy-6-oxononadienedioate/2-hydroxy-6-oxononatrienedioate hydrolase">
    <location>
        <begin position="1"/>
        <end position="288"/>
    </location>
</feature>
<feature type="active site" description="Proton acceptor" evidence="1">
    <location>
        <position position="267"/>
    </location>
</feature>
<feature type="site" description="Transition state stabilizer" evidence="1">
    <location>
        <position position="114"/>
    </location>
</feature>
<feature type="site" description="Catalytic role in ketonization of the dienol substrate (substrate destabilization)" evidence="1">
    <location>
        <position position="192"/>
    </location>
</feature>
<dbReference type="EC" id="3.7.1.14" evidence="1"/>
<dbReference type="EMBL" id="CP000948">
    <property type="protein sequence ID" value="ACB02466.1"/>
    <property type="status" value="ALT_INIT"/>
    <property type="molecule type" value="Genomic_DNA"/>
</dbReference>
<dbReference type="RefSeq" id="WP_000121907.1">
    <property type="nucleotide sequence ID" value="NC_010473.1"/>
</dbReference>
<dbReference type="SMR" id="B1XBJ6"/>
<dbReference type="ESTHER" id="ecoli-mhpc">
    <property type="family name" value="Carbon-carbon_bond_hydrolase"/>
</dbReference>
<dbReference type="MEROPS" id="S33.995"/>
<dbReference type="KEGG" id="ecd:ECDH10B_1361"/>
<dbReference type="HOGENOM" id="CLU_020336_13_2_6"/>
<dbReference type="UniPathway" id="UPA00714"/>
<dbReference type="GO" id="GO:0005737">
    <property type="term" value="C:cytoplasm"/>
    <property type="evidence" value="ECO:0007669"/>
    <property type="project" value="InterPro"/>
</dbReference>
<dbReference type="GO" id="GO:0052823">
    <property type="term" value="F:2-hydroxy-6-oxonona-2,4,7-trienedioate hydrolase activity"/>
    <property type="evidence" value="ECO:0007669"/>
    <property type="project" value="RHEA"/>
</dbReference>
<dbReference type="GO" id="GO:0018771">
    <property type="term" value="F:2-hydroxy-6-oxonona-2,4-dienedioate hydrolase activity"/>
    <property type="evidence" value="ECO:0007669"/>
    <property type="project" value="UniProtKB-UniRule"/>
</dbReference>
<dbReference type="GO" id="GO:0042803">
    <property type="term" value="F:protein homodimerization activity"/>
    <property type="evidence" value="ECO:0007669"/>
    <property type="project" value="InterPro"/>
</dbReference>
<dbReference type="GO" id="GO:0019380">
    <property type="term" value="P:3-phenylpropionate catabolic process"/>
    <property type="evidence" value="ECO:0007669"/>
    <property type="project" value="UniProtKB-UniRule"/>
</dbReference>
<dbReference type="FunFam" id="3.40.50.1820:FF:000085">
    <property type="entry name" value="2-hydroxy-6-oxononadienedioate/2-hydroxy-6-oxononatrienedioate hydrolase"/>
    <property type="match status" value="1"/>
</dbReference>
<dbReference type="Gene3D" id="3.40.50.1820">
    <property type="entry name" value="alpha/beta hydrolase"/>
    <property type="match status" value="1"/>
</dbReference>
<dbReference type="HAMAP" id="MF_01654">
    <property type="entry name" value="MhpC"/>
    <property type="match status" value="1"/>
</dbReference>
<dbReference type="InterPro" id="IPR000073">
    <property type="entry name" value="AB_hydrolase_1"/>
</dbReference>
<dbReference type="InterPro" id="IPR029058">
    <property type="entry name" value="AB_hydrolase_fold"/>
</dbReference>
<dbReference type="InterPro" id="IPR000639">
    <property type="entry name" value="Epox_hydrolase-like"/>
</dbReference>
<dbReference type="InterPro" id="IPR023791">
    <property type="entry name" value="MhpC_alpha/beta_hydrolase"/>
</dbReference>
<dbReference type="PANTHER" id="PTHR43689:SF8">
    <property type="entry name" value="ALPHA_BETA-HYDROLASES SUPERFAMILY PROTEIN"/>
    <property type="match status" value="1"/>
</dbReference>
<dbReference type="PANTHER" id="PTHR43689">
    <property type="entry name" value="HYDROLASE"/>
    <property type="match status" value="1"/>
</dbReference>
<dbReference type="Pfam" id="PF00561">
    <property type="entry name" value="Abhydrolase_1"/>
    <property type="match status" value="1"/>
</dbReference>
<dbReference type="PRINTS" id="PR00111">
    <property type="entry name" value="ABHYDROLASE"/>
</dbReference>
<dbReference type="PRINTS" id="PR00412">
    <property type="entry name" value="EPOXHYDRLASE"/>
</dbReference>
<dbReference type="SUPFAM" id="SSF53474">
    <property type="entry name" value="alpha/beta-Hydrolases"/>
    <property type="match status" value="1"/>
</dbReference>